<sequence>MSKILTFVKNKIIDLINNDQIKYSRVIMIEESDSLLPVDEVHANHGFDCVEMIDENISNENIEQYKTESFFTIN</sequence>
<feature type="chain" id="PRO_0000099478" description="Protein OPG050">
    <location>
        <begin position="1"/>
        <end position="74"/>
    </location>
</feature>
<evidence type="ECO:0000250" key="1">
    <source>
        <dbReference type="UniProtKB" id="P68603"/>
    </source>
</evidence>
<evidence type="ECO:0000305" key="2"/>
<proteinExistence type="inferred from homology"/>
<reference key="1">
    <citation type="journal article" date="1998" name="Virology">
        <title>The complete genomic sequence of the modified vaccinia Ankara strain: comparison with other orthopoxviruses.</title>
        <authorList>
            <person name="Antoine G."/>
            <person name="Scheiflinger F."/>
            <person name="Dorner F."/>
            <person name="Falkner F.G."/>
        </authorList>
    </citation>
    <scope>NUCLEOTIDE SEQUENCE [LARGE SCALE GENOMIC DNA]</scope>
</reference>
<reference key="2">
    <citation type="submission" date="2004-04" db="EMBL/GenBank/DDBJ databases">
        <authorList>
            <person name="Esposito J.J."/>
            <person name="Frace M."/>
            <person name="Sammons S.A."/>
            <person name="Olsen-Rasmussen M.S."/>
            <person name="Osborne J."/>
            <person name="Khristova M."/>
            <person name="Wohlhueter R.M."/>
        </authorList>
    </citation>
    <scope>NUCLEOTIDE SEQUENCE [LARGE SCALE GENOMIC DNA]</scope>
    <source>
        <strain>Isolate Acambis 3000</strain>
    </source>
</reference>
<accession>Q76ZW9</accession>
<protein>
    <recommendedName>
        <fullName>Protein OPG050</fullName>
    </recommendedName>
    <alternativeName>
        <fullName>Protein F6</fullName>
    </alternativeName>
</protein>
<organism>
    <name type="scientific">Vaccinia virus (strain Ankara)</name>
    <name type="common">VACV</name>
    <dbReference type="NCBI Taxonomy" id="126794"/>
    <lineage>
        <taxon>Viruses</taxon>
        <taxon>Varidnaviria</taxon>
        <taxon>Bamfordvirae</taxon>
        <taxon>Nucleocytoviricota</taxon>
        <taxon>Pokkesviricetes</taxon>
        <taxon>Chitovirales</taxon>
        <taxon>Poxviridae</taxon>
        <taxon>Chordopoxvirinae</taxon>
        <taxon>Orthopoxvirus</taxon>
        <taxon>Vaccinia virus</taxon>
    </lineage>
</organism>
<dbReference type="EMBL" id="U94848">
    <property type="protein sequence ID" value="AAB96416.1"/>
    <property type="molecule type" value="Genomic_DNA"/>
</dbReference>
<dbReference type="EMBL" id="AY603355">
    <property type="protein sequence ID" value="AAT10433.1"/>
    <property type="molecule type" value="Genomic_DNA"/>
</dbReference>
<dbReference type="SMR" id="Q76ZW9"/>
<dbReference type="DNASU" id="3707502"/>
<dbReference type="KEGG" id="vg:3707502"/>
<dbReference type="Proteomes" id="UP000159908">
    <property type="component" value="Segment"/>
</dbReference>
<dbReference type="Proteomes" id="UP000172909">
    <property type="component" value="Segment"/>
</dbReference>
<dbReference type="InterPro" id="IPR009521">
    <property type="entry name" value="Orthopox_F6"/>
</dbReference>
<dbReference type="Pfam" id="PF06601">
    <property type="entry name" value="Orthopox_F6"/>
    <property type="match status" value="1"/>
</dbReference>
<comment type="induction">
    <text evidence="1">Expressed in the early phase of the viral replicative cycle.</text>
</comment>
<comment type="similarity">
    <text evidence="2">Belongs to the orthopoxvirus OPG050 family.</text>
</comment>
<name>PG050_VACCA</name>
<keyword id="KW-0244">Early protein</keyword>
<gene>
    <name type="primary">OPG050</name>
    <name type="ordered locus">MVA035L</name>
    <name type="ordered locus">ACAM3000_MVA_035</name>
</gene>
<organismHost>
    <name type="scientific">Homo sapiens</name>
    <name type="common">Human</name>
    <dbReference type="NCBI Taxonomy" id="9606"/>
</organismHost>